<name>MDH_BACCR</name>
<keyword id="KW-0520">NAD</keyword>
<keyword id="KW-0560">Oxidoreductase</keyword>
<keyword id="KW-0597">Phosphoprotein</keyword>
<keyword id="KW-1185">Reference proteome</keyword>
<keyword id="KW-0816">Tricarboxylic acid cycle</keyword>
<proteinExistence type="inferred from homology"/>
<organism>
    <name type="scientific">Bacillus cereus (strain ATCC 14579 / DSM 31 / CCUG 7414 / JCM 2152 / NBRC 15305 / NCIMB 9373 / NCTC 2599 / NRRL B-3711)</name>
    <dbReference type="NCBI Taxonomy" id="226900"/>
    <lineage>
        <taxon>Bacteria</taxon>
        <taxon>Bacillati</taxon>
        <taxon>Bacillota</taxon>
        <taxon>Bacilli</taxon>
        <taxon>Bacillales</taxon>
        <taxon>Bacillaceae</taxon>
        <taxon>Bacillus</taxon>
        <taxon>Bacillus cereus group</taxon>
    </lineage>
</organism>
<sequence length="312" mass="33512">MTIKRKKVSVIGAGFTGATTAFLLAQKELADVVLVDIPQLENPTKGKALDMLEASPVQGFDANIIGTSDYADTADSDVVVITAGIARKPGMSRDDLVATNSKIMKSITRDIAKHSPNAIIVVLTNPVDAMTYSVFKEAGFPKERVIGQSGVLDTARFRTFIAQELNLSVKDITGFVLGGHGDDMVPLVRYSYAGGIPLETLIPKERLEAIVERTRKGGGEIVGLLGNGSAYYAPAASLVEMTEAILKDQRRILPAIAYLEGEYGYSDLYLGVPVILGGNGIEKIIELELLADEKEALDRSVESVRNVMKVLV</sequence>
<dbReference type="EC" id="1.1.1.37" evidence="1"/>
<dbReference type="EMBL" id="AE016877">
    <property type="protein sequence ID" value="AAP11499.1"/>
    <property type="molecule type" value="Genomic_DNA"/>
</dbReference>
<dbReference type="RefSeq" id="NP_834298.1">
    <property type="nucleotide sequence ID" value="NC_004722.1"/>
</dbReference>
<dbReference type="RefSeq" id="WP_000153230.1">
    <property type="nucleotide sequence ID" value="NZ_CP138336.1"/>
</dbReference>
<dbReference type="SMR" id="Q817F9"/>
<dbReference type="STRING" id="226900.BC_4592"/>
<dbReference type="KEGG" id="bce:BC4592"/>
<dbReference type="PATRIC" id="fig|226900.8.peg.4754"/>
<dbReference type="HOGENOM" id="CLU_045401_2_1_9"/>
<dbReference type="OrthoDB" id="9802969at2"/>
<dbReference type="Proteomes" id="UP000001417">
    <property type="component" value="Chromosome"/>
</dbReference>
<dbReference type="GO" id="GO:0005737">
    <property type="term" value="C:cytoplasm"/>
    <property type="evidence" value="ECO:0000318"/>
    <property type="project" value="GO_Central"/>
</dbReference>
<dbReference type="GO" id="GO:0030060">
    <property type="term" value="F:L-malate dehydrogenase (NAD+) activity"/>
    <property type="evidence" value="ECO:0000318"/>
    <property type="project" value="GO_Central"/>
</dbReference>
<dbReference type="GO" id="GO:0019752">
    <property type="term" value="P:carboxylic acid metabolic process"/>
    <property type="evidence" value="ECO:0007669"/>
    <property type="project" value="InterPro"/>
</dbReference>
<dbReference type="GO" id="GO:0006099">
    <property type="term" value="P:tricarboxylic acid cycle"/>
    <property type="evidence" value="ECO:0007669"/>
    <property type="project" value="UniProtKB-UniRule"/>
</dbReference>
<dbReference type="CDD" id="cd01339">
    <property type="entry name" value="LDH-like_MDH"/>
    <property type="match status" value="1"/>
</dbReference>
<dbReference type="FunFam" id="3.40.50.720:FF:000018">
    <property type="entry name" value="Malate dehydrogenase"/>
    <property type="match status" value="1"/>
</dbReference>
<dbReference type="FunFam" id="3.90.110.10:FF:000004">
    <property type="entry name" value="Malate dehydrogenase"/>
    <property type="match status" value="1"/>
</dbReference>
<dbReference type="Gene3D" id="3.90.110.10">
    <property type="entry name" value="Lactate dehydrogenase/glycoside hydrolase, family 4, C-terminal"/>
    <property type="match status" value="1"/>
</dbReference>
<dbReference type="Gene3D" id="3.40.50.720">
    <property type="entry name" value="NAD(P)-binding Rossmann-like Domain"/>
    <property type="match status" value="1"/>
</dbReference>
<dbReference type="HAMAP" id="MF_00487">
    <property type="entry name" value="Malate_dehydrog_3"/>
    <property type="match status" value="1"/>
</dbReference>
<dbReference type="InterPro" id="IPR001557">
    <property type="entry name" value="L-lactate/malate_DH"/>
</dbReference>
<dbReference type="InterPro" id="IPR022383">
    <property type="entry name" value="Lactate/malate_DH_C"/>
</dbReference>
<dbReference type="InterPro" id="IPR001236">
    <property type="entry name" value="Lactate/malate_DH_N"/>
</dbReference>
<dbReference type="InterPro" id="IPR015955">
    <property type="entry name" value="Lactate_DH/Glyco_Ohase_4_C"/>
</dbReference>
<dbReference type="InterPro" id="IPR011275">
    <property type="entry name" value="Malate_DH_type3"/>
</dbReference>
<dbReference type="InterPro" id="IPR036291">
    <property type="entry name" value="NAD(P)-bd_dom_sf"/>
</dbReference>
<dbReference type="NCBIfam" id="TIGR01763">
    <property type="entry name" value="MalateDH_bact"/>
    <property type="match status" value="1"/>
</dbReference>
<dbReference type="NCBIfam" id="NF004863">
    <property type="entry name" value="PRK06223.1"/>
    <property type="match status" value="1"/>
</dbReference>
<dbReference type="PANTHER" id="PTHR43128">
    <property type="entry name" value="L-2-HYDROXYCARBOXYLATE DEHYDROGENASE (NAD(P)(+))"/>
    <property type="match status" value="1"/>
</dbReference>
<dbReference type="PANTHER" id="PTHR43128:SF16">
    <property type="entry name" value="L-LACTATE DEHYDROGENASE"/>
    <property type="match status" value="1"/>
</dbReference>
<dbReference type="Pfam" id="PF02866">
    <property type="entry name" value="Ldh_1_C"/>
    <property type="match status" value="1"/>
</dbReference>
<dbReference type="Pfam" id="PF00056">
    <property type="entry name" value="Ldh_1_N"/>
    <property type="match status" value="1"/>
</dbReference>
<dbReference type="PIRSF" id="PIRSF000102">
    <property type="entry name" value="Lac_mal_DH"/>
    <property type="match status" value="1"/>
</dbReference>
<dbReference type="PRINTS" id="PR00086">
    <property type="entry name" value="LLDHDRGNASE"/>
</dbReference>
<dbReference type="SUPFAM" id="SSF56327">
    <property type="entry name" value="LDH C-terminal domain-like"/>
    <property type="match status" value="1"/>
</dbReference>
<dbReference type="SUPFAM" id="SSF51735">
    <property type="entry name" value="NAD(P)-binding Rossmann-fold domains"/>
    <property type="match status" value="1"/>
</dbReference>
<protein>
    <recommendedName>
        <fullName evidence="1">Malate dehydrogenase</fullName>
        <ecNumber evidence="1">1.1.1.37</ecNumber>
    </recommendedName>
</protein>
<comment type="function">
    <text evidence="1">Catalyzes the reversible oxidation of malate to oxaloacetate.</text>
</comment>
<comment type="catalytic activity">
    <reaction evidence="1">
        <text>(S)-malate + NAD(+) = oxaloacetate + NADH + H(+)</text>
        <dbReference type="Rhea" id="RHEA:21432"/>
        <dbReference type="ChEBI" id="CHEBI:15378"/>
        <dbReference type="ChEBI" id="CHEBI:15589"/>
        <dbReference type="ChEBI" id="CHEBI:16452"/>
        <dbReference type="ChEBI" id="CHEBI:57540"/>
        <dbReference type="ChEBI" id="CHEBI:57945"/>
        <dbReference type="EC" id="1.1.1.37"/>
    </reaction>
</comment>
<comment type="similarity">
    <text evidence="1">Belongs to the LDH/MDH superfamily. MDH type 3 family.</text>
</comment>
<accession>Q817F9</accession>
<evidence type="ECO:0000255" key="1">
    <source>
        <dbReference type="HAMAP-Rule" id="MF_00487"/>
    </source>
</evidence>
<reference key="1">
    <citation type="journal article" date="2003" name="Nature">
        <title>Genome sequence of Bacillus cereus and comparative analysis with Bacillus anthracis.</title>
        <authorList>
            <person name="Ivanova N."/>
            <person name="Sorokin A."/>
            <person name="Anderson I."/>
            <person name="Galleron N."/>
            <person name="Candelon B."/>
            <person name="Kapatral V."/>
            <person name="Bhattacharyya A."/>
            <person name="Reznik G."/>
            <person name="Mikhailova N."/>
            <person name="Lapidus A."/>
            <person name="Chu L."/>
            <person name="Mazur M."/>
            <person name="Goltsman E."/>
            <person name="Larsen N."/>
            <person name="D'Souza M."/>
            <person name="Walunas T."/>
            <person name="Grechkin Y."/>
            <person name="Pusch G."/>
            <person name="Haselkorn R."/>
            <person name="Fonstein M."/>
            <person name="Ehrlich S.D."/>
            <person name="Overbeek R."/>
            <person name="Kyrpides N.C."/>
        </authorList>
    </citation>
    <scope>NUCLEOTIDE SEQUENCE [LARGE SCALE GENOMIC DNA]</scope>
    <source>
        <strain>ATCC 14579 / DSM 31 / CCUG 7414 / JCM 2152 / NBRC 15305 / NCIMB 9373 / NCTC 2599 / NRRL B-3711</strain>
    </source>
</reference>
<feature type="chain" id="PRO_0000113426" description="Malate dehydrogenase">
    <location>
        <begin position="1"/>
        <end position="312"/>
    </location>
</feature>
<feature type="active site" description="Proton acceptor" evidence="1">
    <location>
        <position position="180"/>
    </location>
</feature>
<feature type="binding site" evidence="1">
    <location>
        <begin position="12"/>
        <end position="17"/>
    </location>
    <ligand>
        <name>NAD(+)</name>
        <dbReference type="ChEBI" id="CHEBI:57540"/>
    </ligand>
</feature>
<feature type="binding site" evidence="1">
    <location>
        <position position="36"/>
    </location>
    <ligand>
        <name>NAD(+)</name>
        <dbReference type="ChEBI" id="CHEBI:57540"/>
    </ligand>
</feature>
<feature type="binding site" evidence="1">
    <location>
        <position position="87"/>
    </location>
    <ligand>
        <name>substrate</name>
    </ligand>
</feature>
<feature type="binding site" evidence="1">
    <location>
        <position position="93"/>
    </location>
    <ligand>
        <name>substrate</name>
    </ligand>
</feature>
<feature type="binding site" evidence="1">
    <location>
        <position position="100"/>
    </location>
    <ligand>
        <name>NAD(+)</name>
        <dbReference type="ChEBI" id="CHEBI:57540"/>
    </ligand>
</feature>
<feature type="binding site" evidence="1">
    <location>
        <begin position="123"/>
        <end position="125"/>
    </location>
    <ligand>
        <name>NAD(+)</name>
        <dbReference type="ChEBI" id="CHEBI:57540"/>
    </ligand>
</feature>
<feature type="binding site" evidence="1">
    <location>
        <position position="125"/>
    </location>
    <ligand>
        <name>substrate</name>
    </ligand>
</feature>
<feature type="binding site" evidence="1">
    <location>
        <position position="156"/>
    </location>
    <ligand>
        <name>substrate</name>
    </ligand>
</feature>
<feature type="modified residue" description="Phosphoserine" evidence="1">
    <location>
        <position position="149"/>
    </location>
</feature>
<gene>
    <name evidence="1" type="primary">mdh</name>
    <name type="ordered locus">BC_4592</name>
</gene>